<gene>
    <name evidence="1" type="primary">obg</name>
    <name type="ordered locus">NFA_13550</name>
</gene>
<feature type="chain" id="PRO_0000386095" description="GTPase Obg">
    <location>
        <begin position="1"/>
        <end position="485"/>
    </location>
</feature>
<feature type="domain" description="Obg" evidence="3">
    <location>
        <begin position="2"/>
        <end position="159"/>
    </location>
</feature>
<feature type="domain" description="OBG-type G" evidence="1">
    <location>
        <begin position="160"/>
        <end position="340"/>
    </location>
</feature>
<feature type="domain" description="OCT" evidence="2">
    <location>
        <begin position="358"/>
        <end position="438"/>
    </location>
</feature>
<feature type="region of interest" description="Disordered" evidence="4">
    <location>
        <begin position="64"/>
        <end position="84"/>
    </location>
</feature>
<feature type="region of interest" description="Disordered" evidence="4">
    <location>
        <begin position="457"/>
        <end position="485"/>
    </location>
</feature>
<feature type="compositionally biased region" description="Basic and acidic residues" evidence="4">
    <location>
        <begin position="457"/>
        <end position="469"/>
    </location>
</feature>
<feature type="binding site" evidence="1">
    <location>
        <begin position="166"/>
        <end position="173"/>
    </location>
    <ligand>
        <name>GTP</name>
        <dbReference type="ChEBI" id="CHEBI:37565"/>
    </ligand>
</feature>
<feature type="binding site" evidence="1">
    <location>
        <position position="173"/>
    </location>
    <ligand>
        <name>Mg(2+)</name>
        <dbReference type="ChEBI" id="CHEBI:18420"/>
    </ligand>
</feature>
<feature type="binding site" evidence="1">
    <location>
        <begin position="191"/>
        <end position="195"/>
    </location>
    <ligand>
        <name>GTP</name>
        <dbReference type="ChEBI" id="CHEBI:37565"/>
    </ligand>
</feature>
<feature type="binding site" evidence="1">
    <location>
        <position position="193"/>
    </location>
    <ligand>
        <name>Mg(2+)</name>
        <dbReference type="ChEBI" id="CHEBI:18420"/>
    </ligand>
</feature>
<feature type="binding site" evidence="1">
    <location>
        <begin position="212"/>
        <end position="215"/>
    </location>
    <ligand>
        <name>GTP</name>
        <dbReference type="ChEBI" id="CHEBI:37565"/>
    </ligand>
</feature>
<feature type="binding site" evidence="1">
    <location>
        <begin position="292"/>
        <end position="295"/>
    </location>
    <ligand>
        <name>GTP</name>
        <dbReference type="ChEBI" id="CHEBI:37565"/>
    </ligand>
</feature>
<feature type="binding site" evidence="1">
    <location>
        <begin position="321"/>
        <end position="323"/>
    </location>
    <ligand>
        <name>GTP</name>
        <dbReference type="ChEBI" id="CHEBI:37565"/>
    </ligand>
</feature>
<accession>Q5Z041</accession>
<organism>
    <name type="scientific">Nocardia farcinica (strain IFM 10152)</name>
    <dbReference type="NCBI Taxonomy" id="247156"/>
    <lineage>
        <taxon>Bacteria</taxon>
        <taxon>Bacillati</taxon>
        <taxon>Actinomycetota</taxon>
        <taxon>Actinomycetes</taxon>
        <taxon>Mycobacteriales</taxon>
        <taxon>Nocardiaceae</taxon>
        <taxon>Nocardia</taxon>
    </lineage>
</organism>
<evidence type="ECO:0000255" key="1">
    <source>
        <dbReference type="HAMAP-Rule" id="MF_01454"/>
    </source>
</evidence>
<evidence type="ECO:0000255" key="2">
    <source>
        <dbReference type="PROSITE-ProRule" id="PRU01229"/>
    </source>
</evidence>
<evidence type="ECO:0000255" key="3">
    <source>
        <dbReference type="PROSITE-ProRule" id="PRU01231"/>
    </source>
</evidence>
<evidence type="ECO:0000256" key="4">
    <source>
        <dbReference type="SAM" id="MobiDB-lite"/>
    </source>
</evidence>
<comment type="function">
    <text evidence="1">An essential GTPase which binds GTP, GDP and possibly (p)ppGpp with moderate affinity, with high nucleotide exchange rates and a fairly low GTP hydrolysis rate. Plays a role in control of the cell cycle, stress response, ribosome biogenesis and in those bacteria that undergo differentiation, in morphogenesis control.</text>
</comment>
<comment type="cofactor">
    <cofactor evidence="1">
        <name>Mg(2+)</name>
        <dbReference type="ChEBI" id="CHEBI:18420"/>
    </cofactor>
</comment>
<comment type="subunit">
    <text evidence="1">Monomer.</text>
</comment>
<comment type="subcellular location">
    <subcellularLocation>
        <location evidence="1">Cytoplasm</location>
    </subcellularLocation>
</comment>
<comment type="similarity">
    <text evidence="1">Belongs to the TRAFAC class OBG-HflX-like GTPase superfamily. OBG GTPase family.</text>
</comment>
<dbReference type="EC" id="3.6.5.-" evidence="1"/>
<dbReference type="EMBL" id="AP006618">
    <property type="protein sequence ID" value="BAD56200.1"/>
    <property type="molecule type" value="Genomic_DNA"/>
</dbReference>
<dbReference type="SMR" id="Q5Z041"/>
<dbReference type="STRING" id="247156.NFA_13550"/>
<dbReference type="GeneID" id="61132177"/>
<dbReference type="KEGG" id="nfa:NFA_13550"/>
<dbReference type="eggNOG" id="COG0536">
    <property type="taxonomic scope" value="Bacteria"/>
</dbReference>
<dbReference type="HOGENOM" id="CLU_011747_0_1_11"/>
<dbReference type="OrthoDB" id="9807318at2"/>
<dbReference type="Proteomes" id="UP000006820">
    <property type="component" value="Chromosome"/>
</dbReference>
<dbReference type="GO" id="GO:0005737">
    <property type="term" value="C:cytoplasm"/>
    <property type="evidence" value="ECO:0007669"/>
    <property type="project" value="UniProtKB-SubCell"/>
</dbReference>
<dbReference type="GO" id="GO:0005525">
    <property type="term" value="F:GTP binding"/>
    <property type="evidence" value="ECO:0007669"/>
    <property type="project" value="UniProtKB-UniRule"/>
</dbReference>
<dbReference type="GO" id="GO:0003924">
    <property type="term" value="F:GTPase activity"/>
    <property type="evidence" value="ECO:0007669"/>
    <property type="project" value="UniProtKB-UniRule"/>
</dbReference>
<dbReference type="GO" id="GO:0000287">
    <property type="term" value="F:magnesium ion binding"/>
    <property type="evidence" value="ECO:0007669"/>
    <property type="project" value="InterPro"/>
</dbReference>
<dbReference type="GO" id="GO:0042254">
    <property type="term" value="P:ribosome biogenesis"/>
    <property type="evidence" value="ECO:0007669"/>
    <property type="project" value="UniProtKB-UniRule"/>
</dbReference>
<dbReference type="CDD" id="cd01898">
    <property type="entry name" value="Obg"/>
    <property type="match status" value="1"/>
</dbReference>
<dbReference type="FunFam" id="2.70.210.12:FF:000001">
    <property type="entry name" value="GTPase Obg"/>
    <property type="match status" value="1"/>
</dbReference>
<dbReference type="Gene3D" id="3.30.300.350">
    <property type="entry name" value="GTP-binding protein OBG, C-terminal domain"/>
    <property type="match status" value="1"/>
</dbReference>
<dbReference type="Gene3D" id="2.70.210.12">
    <property type="entry name" value="GTP1/OBG domain"/>
    <property type="match status" value="1"/>
</dbReference>
<dbReference type="Gene3D" id="3.40.50.300">
    <property type="entry name" value="P-loop containing nucleotide triphosphate hydrolases"/>
    <property type="match status" value="1"/>
</dbReference>
<dbReference type="HAMAP" id="MF_01454">
    <property type="entry name" value="GTPase_Obg"/>
    <property type="match status" value="1"/>
</dbReference>
<dbReference type="InterPro" id="IPR031167">
    <property type="entry name" value="G_OBG"/>
</dbReference>
<dbReference type="InterPro" id="IPR006073">
    <property type="entry name" value="GTP-bd"/>
</dbReference>
<dbReference type="InterPro" id="IPR014100">
    <property type="entry name" value="GTP-bd_Obg/CgtA"/>
</dbReference>
<dbReference type="InterPro" id="IPR036346">
    <property type="entry name" value="GTP-bd_prot_GTP1/OBG_C_sf"/>
</dbReference>
<dbReference type="InterPro" id="IPR006074">
    <property type="entry name" value="GTP1-OBG_CS"/>
</dbReference>
<dbReference type="InterPro" id="IPR006169">
    <property type="entry name" value="GTP1_OBG_dom"/>
</dbReference>
<dbReference type="InterPro" id="IPR036726">
    <property type="entry name" value="GTP1_OBG_dom_sf"/>
</dbReference>
<dbReference type="InterPro" id="IPR045086">
    <property type="entry name" value="OBG_GTPase"/>
</dbReference>
<dbReference type="InterPro" id="IPR015349">
    <property type="entry name" value="OCT_dom"/>
</dbReference>
<dbReference type="InterPro" id="IPR027417">
    <property type="entry name" value="P-loop_NTPase"/>
</dbReference>
<dbReference type="NCBIfam" id="TIGR02729">
    <property type="entry name" value="Obg_CgtA"/>
    <property type="match status" value="1"/>
</dbReference>
<dbReference type="NCBIfam" id="TIGR03595">
    <property type="entry name" value="Obg_CgtA_exten"/>
    <property type="match status" value="1"/>
</dbReference>
<dbReference type="NCBIfam" id="NF008954">
    <property type="entry name" value="PRK12296.1"/>
    <property type="match status" value="1"/>
</dbReference>
<dbReference type="NCBIfam" id="NF008955">
    <property type="entry name" value="PRK12297.1"/>
    <property type="match status" value="1"/>
</dbReference>
<dbReference type="NCBIfam" id="NF008956">
    <property type="entry name" value="PRK12299.1"/>
    <property type="match status" value="1"/>
</dbReference>
<dbReference type="PANTHER" id="PTHR11702">
    <property type="entry name" value="DEVELOPMENTALLY REGULATED GTP-BINDING PROTEIN-RELATED"/>
    <property type="match status" value="1"/>
</dbReference>
<dbReference type="PANTHER" id="PTHR11702:SF31">
    <property type="entry name" value="MITOCHONDRIAL RIBOSOME-ASSOCIATED GTPASE 2"/>
    <property type="match status" value="1"/>
</dbReference>
<dbReference type="Pfam" id="PF09269">
    <property type="entry name" value="DUF1967"/>
    <property type="match status" value="1"/>
</dbReference>
<dbReference type="Pfam" id="PF01018">
    <property type="entry name" value="GTP1_OBG"/>
    <property type="match status" value="1"/>
</dbReference>
<dbReference type="Pfam" id="PF01926">
    <property type="entry name" value="MMR_HSR1"/>
    <property type="match status" value="1"/>
</dbReference>
<dbReference type="PRINTS" id="PR00326">
    <property type="entry name" value="GTP1OBG"/>
</dbReference>
<dbReference type="SUPFAM" id="SSF102741">
    <property type="entry name" value="Obg GTP-binding protein C-terminal domain"/>
    <property type="match status" value="1"/>
</dbReference>
<dbReference type="SUPFAM" id="SSF82051">
    <property type="entry name" value="Obg GTP-binding protein N-terminal domain"/>
    <property type="match status" value="1"/>
</dbReference>
<dbReference type="SUPFAM" id="SSF52540">
    <property type="entry name" value="P-loop containing nucleoside triphosphate hydrolases"/>
    <property type="match status" value="1"/>
</dbReference>
<dbReference type="PROSITE" id="PS51710">
    <property type="entry name" value="G_OBG"/>
    <property type="match status" value="1"/>
</dbReference>
<dbReference type="PROSITE" id="PS00905">
    <property type="entry name" value="GTP1_OBG"/>
    <property type="match status" value="1"/>
</dbReference>
<dbReference type="PROSITE" id="PS51883">
    <property type="entry name" value="OBG"/>
    <property type="match status" value="1"/>
</dbReference>
<dbReference type="PROSITE" id="PS51881">
    <property type="entry name" value="OCT"/>
    <property type="match status" value="1"/>
</dbReference>
<protein>
    <recommendedName>
        <fullName evidence="1">GTPase Obg</fullName>
        <ecNumber evidence="1">3.6.5.-</ecNumber>
    </recommendedName>
    <alternativeName>
        <fullName evidence="1">GTP-binding protein Obg</fullName>
    </alternativeName>
</protein>
<keyword id="KW-0963">Cytoplasm</keyword>
<keyword id="KW-0342">GTP-binding</keyword>
<keyword id="KW-0378">Hydrolase</keyword>
<keyword id="KW-0460">Magnesium</keyword>
<keyword id="KW-0479">Metal-binding</keyword>
<keyword id="KW-0547">Nucleotide-binding</keyword>
<keyword id="KW-1185">Reference proteome</keyword>
<reference key="1">
    <citation type="journal article" date="2004" name="Proc. Natl. Acad. Sci. U.S.A.">
        <title>The complete genomic sequence of Nocardia farcinica IFM 10152.</title>
        <authorList>
            <person name="Ishikawa J."/>
            <person name="Yamashita A."/>
            <person name="Mikami Y."/>
            <person name="Hoshino Y."/>
            <person name="Kurita H."/>
            <person name="Hotta K."/>
            <person name="Shiba T."/>
            <person name="Hattori M."/>
        </authorList>
    </citation>
    <scope>NUCLEOTIDE SEQUENCE [LARGE SCALE GENOMIC DNA]</scope>
    <source>
        <strain>IFM 10152</strain>
    </source>
</reference>
<proteinExistence type="inferred from homology"/>
<sequence>MSKFIDRVVLHVRAGKGGHGCASVHREKFKPLGGPDGGNGGNGGDVVLEVDPNVHTLLDFHFHPHAKAGNGKPGEGGNRDGKMGSDLLLKVPDGTVVLDRDGEVLVDLVGAGNRFVAARGGRGGLGNAALASKARKAPGFALLGEDGEERDLVLELKSVADVGLVGFPSAGKSSLVSVLSAAKPKIADYPFTTLVPNLGVVASGDTTFTIADVPGLIPGASQGRGLGLDFLRHLERCAVLAHVVDCATLEPGRDPISDVDALEAELAAYKPALAADAGLGDLADRPRVVILNKTDVPDAAELAEMVTPEFTARGWPVFQISAVSRAGLRPLTFALADLVREYREAHPKAAPKRPVIRPIAVDESGFTVHPDPDEPGGFIVRGARPERWVRQTQFDNDEAVGYLADRLARLGVEEELVRLGAEPGAPVTIGDVTFDWEPQISAGVDMVRTGRGTDVRLEQSDRVSAAERKHASRVRRGLVEDDEQR</sequence>
<name>OBG_NOCFA</name>